<keyword id="KW-0449">Lipoprotein</keyword>
<keyword id="KW-0479">Metal-binding</keyword>
<keyword id="KW-0488">Methylation</keyword>
<keyword id="KW-0636">Prenylation</keyword>
<keyword id="KW-1185">Reference proteome</keyword>
<reference key="1">
    <citation type="journal article" date="2000" name="DNA Res.">
        <title>Structural analysis of Arabidopsis thaliana chromosome 3. II. Sequence features of the 4,251,695 bp regions covered by 90 P1, TAC and BAC clones.</title>
        <authorList>
            <person name="Kaneko T."/>
            <person name="Katoh T."/>
            <person name="Sato S."/>
            <person name="Nakamura Y."/>
            <person name="Asamizu E."/>
            <person name="Tabata S."/>
        </authorList>
    </citation>
    <scope>NUCLEOTIDE SEQUENCE [LARGE SCALE GENOMIC DNA]</scope>
    <source>
        <strain>cv. Columbia</strain>
    </source>
</reference>
<reference key="2">
    <citation type="journal article" date="2017" name="Plant J.">
        <title>Araport11: a complete reannotation of the Arabidopsis thaliana reference genome.</title>
        <authorList>
            <person name="Cheng C.Y."/>
            <person name="Krishnakumar V."/>
            <person name="Chan A.P."/>
            <person name="Thibaud-Nissen F."/>
            <person name="Schobel S."/>
            <person name="Town C.D."/>
        </authorList>
    </citation>
    <scope>GENOME REANNOTATION</scope>
    <source>
        <strain>cv. Columbia</strain>
    </source>
</reference>
<reference key="3">
    <citation type="journal article" date="2010" name="Metallomics">
        <title>Metallochaperone-like genes in Arabidopsis thaliana.</title>
        <authorList>
            <person name="Tehseen M."/>
            <person name="Cairns N."/>
            <person name="Sherson S."/>
            <person name="Cobbett C.S."/>
        </authorList>
    </citation>
    <scope>GENE FAMILY</scope>
    <scope>NOMENCLATURE</scope>
</reference>
<reference key="4">
    <citation type="journal article" date="2013" name="FEBS J.">
        <title>Heavy metal-associated isoprenylated plant protein (HIPP): characterization of a family of proteins exclusive to plants.</title>
        <authorList>
            <person name="de Abreu-Neto J.B."/>
            <person name="Turchetto-Zolet A.C."/>
            <person name="de Oliveira L.F."/>
            <person name="Zanettini M.H."/>
            <person name="Margis-Pinheiro M."/>
        </authorList>
    </citation>
    <scope>GENE FAMILY</scope>
    <scope>NOMENCLATURE</scope>
</reference>
<accession>F4JDJ0</accession>
<gene>
    <name evidence="4 5" type="primary">HIPP47</name>
    <name evidence="8" type="ordered locus">At3g20180</name>
    <name evidence="9" type="ORF">MAL21</name>
</gene>
<sequence length="118" mass="12888">MRIKLSVNSEKCRKKAMQVAVAADGVTSVAMEGEFQDELVVVGDGVDSASLIMALRKKACHVTLETLEEVKKPQVEEKSITPHCCIAQCPVVSNEQPRPEVYRIVHDSYGPTTGCLVM</sequence>
<protein>
    <recommendedName>
        <fullName evidence="4 5">Heavy metal-associated isoprenylated plant protein 47</fullName>
        <shortName evidence="4 5">AtHIP47</shortName>
    </recommendedName>
</protein>
<organism>
    <name type="scientific">Arabidopsis thaliana</name>
    <name type="common">Mouse-ear cress</name>
    <dbReference type="NCBI Taxonomy" id="3702"/>
    <lineage>
        <taxon>Eukaryota</taxon>
        <taxon>Viridiplantae</taxon>
        <taxon>Streptophyta</taxon>
        <taxon>Embryophyta</taxon>
        <taxon>Tracheophyta</taxon>
        <taxon>Spermatophyta</taxon>
        <taxon>Magnoliopsida</taxon>
        <taxon>eudicotyledons</taxon>
        <taxon>Gunneridae</taxon>
        <taxon>Pentapetalae</taxon>
        <taxon>rosids</taxon>
        <taxon>malvids</taxon>
        <taxon>Brassicales</taxon>
        <taxon>Brassicaceae</taxon>
        <taxon>Camelineae</taxon>
        <taxon>Arabidopsis</taxon>
    </lineage>
</organism>
<feature type="chain" id="PRO_0000437866" description="Heavy metal-associated isoprenylated plant protein 47">
    <location>
        <begin position="1"/>
        <end position="115"/>
    </location>
</feature>
<feature type="propeptide" id="PRO_0000437867" description="Removed in mature form" evidence="6">
    <location>
        <begin position="116"/>
        <end position="118"/>
    </location>
</feature>
<feature type="domain" description="HMA" evidence="3">
    <location>
        <begin position="1"/>
        <end position="67"/>
    </location>
</feature>
<feature type="modified residue" description="Cysteine methyl ester" evidence="2">
    <location>
        <position position="115"/>
    </location>
</feature>
<feature type="lipid moiety-binding region" description="S-farnesyl cysteine" evidence="2">
    <location>
        <position position="115"/>
    </location>
</feature>
<comment type="function">
    <text evidence="1">Heavy-metal-binding protein.</text>
</comment>
<comment type="similarity">
    <text evidence="6">Belongs to the HIPP family.</text>
</comment>
<comment type="caution">
    <text evidence="7">Contains an apparent HMA-like domain but lacks the core conserved Cys-X-X-Cys motif.</text>
</comment>
<dbReference type="EMBL" id="AP000383">
    <property type="status" value="NOT_ANNOTATED_CDS"/>
    <property type="molecule type" value="Genomic_DNA"/>
</dbReference>
<dbReference type="EMBL" id="CP002686">
    <property type="protein sequence ID" value="AEE76344.1"/>
    <property type="molecule type" value="Genomic_DNA"/>
</dbReference>
<dbReference type="RefSeq" id="NP_188653.1">
    <property type="nucleotide sequence ID" value="NM_112909.1"/>
</dbReference>
<dbReference type="SMR" id="F4JDJ0"/>
<dbReference type="GlyGen" id="F4JDJ0">
    <property type="glycosylation" value="1 site"/>
</dbReference>
<dbReference type="PaxDb" id="3702-AT3G20180.1"/>
<dbReference type="DNASU" id="821562"/>
<dbReference type="EnsemblPlants" id="AT3G20180.1">
    <property type="protein sequence ID" value="AT3G20180.1"/>
    <property type="gene ID" value="AT3G20180"/>
</dbReference>
<dbReference type="GeneID" id="821562"/>
<dbReference type="Gramene" id="AT3G20180.1">
    <property type="protein sequence ID" value="AT3G20180.1"/>
    <property type="gene ID" value="AT3G20180"/>
</dbReference>
<dbReference type="KEGG" id="ath:AT3G20180"/>
<dbReference type="Araport" id="AT3G20180"/>
<dbReference type="TAIR" id="AT3G20180"/>
<dbReference type="HOGENOM" id="CLU_092610_2_3_1"/>
<dbReference type="InParanoid" id="F4JDJ0"/>
<dbReference type="OrthoDB" id="692882at2759"/>
<dbReference type="PhylomeDB" id="F4JDJ0"/>
<dbReference type="PRO" id="PR:F4JDJ0"/>
<dbReference type="Proteomes" id="UP000006548">
    <property type="component" value="Chromosome 3"/>
</dbReference>
<dbReference type="ExpressionAtlas" id="F4JDJ0">
    <property type="expression patterns" value="baseline and differential"/>
</dbReference>
<dbReference type="GO" id="GO:0046872">
    <property type="term" value="F:metal ion binding"/>
    <property type="evidence" value="ECO:0007669"/>
    <property type="project" value="UniProtKB-KW"/>
</dbReference>
<dbReference type="Gene3D" id="3.30.70.100">
    <property type="match status" value="1"/>
</dbReference>
<dbReference type="InterPro" id="IPR042885">
    <property type="entry name" value="HIPP47/16"/>
</dbReference>
<dbReference type="InterPro" id="IPR006121">
    <property type="entry name" value="HMA_dom"/>
</dbReference>
<dbReference type="PANTHER" id="PTHR46932">
    <property type="entry name" value="HEAVY METAL-ASSOCIATED ISOPRENYLATED PLANT PROTEIN 47"/>
    <property type="match status" value="1"/>
</dbReference>
<dbReference type="PANTHER" id="PTHR46932:SF12">
    <property type="entry name" value="HEAVY METAL-ASSOCIATED ISOPRENYLATED PLANT PROTEIN 47"/>
    <property type="match status" value="1"/>
</dbReference>
<dbReference type="PROSITE" id="PS50846">
    <property type="entry name" value="HMA_2"/>
    <property type="match status" value="1"/>
</dbReference>
<name>HIP47_ARATH</name>
<proteinExistence type="inferred from homology"/>
<evidence type="ECO:0000250" key="1">
    <source>
        <dbReference type="UniProtKB" id="Q9LZF1"/>
    </source>
</evidence>
<evidence type="ECO:0000250" key="2">
    <source>
        <dbReference type="UniProtKB" id="Q9SZN7"/>
    </source>
</evidence>
<evidence type="ECO:0000255" key="3">
    <source>
        <dbReference type="PROSITE-ProRule" id="PRU00280"/>
    </source>
</evidence>
<evidence type="ECO:0000303" key="4">
    <source>
    </source>
</evidence>
<evidence type="ECO:0000303" key="5">
    <source>
    </source>
</evidence>
<evidence type="ECO:0000305" key="6"/>
<evidence type="ECO:0000305" key="7">
    <source>
    </source>
</evidence>
<evidence type="ECO:0000312" key="8">
    <source>
        <dbReference type="Araport" id="AT3G20180"/>
    </source>
</evidence>
<evidence type="ECO:0000312" key="9">
    <source>
        <dbReference type="EMBL" id="AP000383"/>
    </source>
</evidence>